<gene>
    <name evidence="1" type="primary">pyrF</name>
    <name type="ordered locus">MM_2083</name>
</gene>
<keyword id="KW-0210">Decarboxylase</keyword>
<keyword id="KW-0456">Lyase</keyword>
<keyword id="KW-0665">Pyrimidine biosynthesis</keyword>
<proteinExistence type="inferred from homology"/>
<feature type="chain" id="PRO_0000134611" description="Orotidine 5'-phosphate decarboxylase">
    <location>
        <begin position="1"/>
        <end position="220"/>
    </location>
</feature>
<feature type="active site" description="Proton donor" evidence="1">
    <location>
        <position position="62"/>
    </location>
</feature>
<feature type="binding site" evidence="1">
    <location>
        <position position="12"/>
    </location>
    <ligand>
        <name>substrate</name>
    </ligand>
</feature>
<feature type="binding site" evidence="1">
    <location>
        <position position="34"/>
    </location>
    <ligand>
        <name>substrate</name>
    </ligand>
</feature>
<feature type="binding site" evidence="1">
    <location>
        <begin position="60"/>
        <end position="69"/>
    </location>
    <ligand>
        <name>substrate</name>
    </ligand>
</feature>
<feature type="binding site" evidence="1">
    <location>
        <position position="117"/>
    </location>
    <ligand>
        <name>substrate</name>
    </ligand>
</feature>
<feature type="binding site" evidence="1">
    <location>
        <begin position="170"/>
        <end position="180"/>
    </location>
    <ligand>
        <name>substrate</name>
    </ligand>
</feature>
<feature type="binding site" evidence="1">
    <location>
        <position position="193"/>
    </location>
    <ligand>
        <name>substrate</name>
    </ligand>
</feature>
<feature type="binding site" evidence="1">
    <location>
        <position position="194"/>
    </location>
    <ligand>
        <name>substrate</name>
    </ligand>
</feature>
<protein>
    <recommendedName>
        <fullName evidence="1">Orotidine 5'-phosphate decarboxylase</fullName>
        <ecNumber evidence="1">4.1.1.23</ecNumber>
    </recommendedName>
    <alternativeName>
        <fullName evidence="1">OMP decarboxylase</fullName>
        <shortName evidence="1">OMPDCase</shortName>
        <shortName evidence="1">OMPdecase</shortName>
    </alternativeName>
</protein>
<reference key="1">
    <citation type="journal article" date="2002" name="J. Mol. Microbiol. Biotechnol.">
        <title>The genome of Methanosarcina mazei: evidence for lateral gene transfer between Bacteria and Archaea.</title>
        <authorList>
            <person name="Deppenmeier U."/>
            <person name="Johann A."/>
            <person name="Hartsch T."/>
            <person name="Merkl R."/>
            <person name="Schmitz R.A."/>
            <person name="Martinez-Arias R."/>
            <person name="Henne A."/>
            <person name="Wiezer A."/>
            <person name="Baeumer S."/>
            <person name="Jacobi C."/>
            <person name="Brueggemann H."/>
            <person name="Lienard T."/>
            <person name="Christmann A."/>
            <person name="Boemecke M."/>
            <person name="Steckel S."/>
            <person name="Bhattacharyya A."/>
            <person name="Lykidis A."/>
            <person name="Overbeek R."/>
            <person name="Klenk H.-P."/>
            <person name="Gunsalus R.P."/>
            <person name="Fritz H.-J."/>
            <person name="Gottschalk G."/>
        </authorList>
    </citation>
    <scope>NUCLEOTIDE SEQUENCE [LARGE SCALE GENOMIC DNA]</scope>
    <source>
        <strain>ATCC BAA-159 / DSM 3647 / Goe1 / Go1 / JCM 11833 / OCM 88</strain>
    </source>
</reference>
<sequence>MERNTCMILALDVTEREEALKIAENVREFVDAIKVGYPLILATGLDIIRELARFAPVIADFKVADIPNTNRLICEQVFKAGADAVIVQGFTGRDSLDACIEVASKYGKDVFVVSEMSHPGGAEFLQSAAEAIAKMAVEAGAFGLVAPATRPERVKEIRKIIGDRLTIISPGVGAQGGKASDVISAGADWVIVGRSIYKAESPKEAACEIAEEIQAELRGK</sequence>
<organism>
    <name type="scientific">Methanosarcina mazei (strain ATCC BAA-159 / DSM 3647 / Goe1 / Go1 / JCM 11833 / OCM 88)</name>
    <name type="common">Methanosarcina frisia</name>
    <dbReference type="NCBI Taxonomy" id="192952"/>
    <lineage>
        <taxon>Archaea</taxon>
        <taxon>Methanobacteriati</taxon>
        <taxon>Methanobacteriota</taxon>
        <taxon>Stenosarchaea group</taxon>
        <taxon>Methanomicrobia</taxon>
        <taxon>Methanosarcinales</taxon>
        <taxon>Methanosarcinaceae</taxon>
        <taxon>Methanosarcina</taxon>
    </lineage>
</organism>
<name>PYRF_METMA</name>
<comment type="function">
    <text evidence="1">Catalyzes the decarboxylation of orotidine 5'-monophosphate (OMP) to uridine 5'-monophosphate (UMP).</text>
</comment>
<comment type="catalytic activity">
    <reaction evidence="1">
        <text>orotidine 5'-phosphate + H(+) = UMP + CO2</text>
        <dbReference type="Rhea" id="RHEA:11596"/>
        <dbReference type="ChEBI" id="CHEBI:15378"/>
        <dbReference type="ChEBI" id="CHEBI:16526"/>
        <dbReference type="ChEBI" id="CHEBI:57538"/>
        <dbReference type="ChEBI" id="CHEBI:57865"/>
        <dbReference type="EC" id="4.1.1.23"/>
    </reaction>
</comment>
<comment type="pathway">
    <text evidence="1">Pyrimidine metabolism; UMP biosynthesis via de novo pathway; UMP from orotate: step 2/2.</text>
</comment>
<comment type="subunit">
    <text evidence="1">Homodimer.</text>
</comment>
<comment type="similarity">
    <text evidence="1">Belongs to the OMP decarboxylase family. Type 1 subfamily.</text>
</comment>
<accession>Q8PV88</accession>
<dbReference type="EC" id="4.1.1.23" evidence="1"/>
<dbReference type="EMBL" id="AE008384">
    <property type="protein sequence ID" value="AAM31779.1"/>
    <property type="molecule type" value="Genomic_DNA"/>
</dbReference>
<dbReference type="RefSeq" id="WP_011034015.1">
    <property type="nucleotide sequence ID" value="NC_003901.1"/>
</dbReference>
<dbReference type="SMR" id="Q8PV88"/>
<dbReference type="GeneID" id="66136441"/>
<dbReference type="KEGG" id="mma:MM_2083"/>
<dbReference type="PATRIC" id="fig|192952.21.peg.2391"/>
<dbReference type="eggNOG" id="arCOG00081">
    <property type="taxonomic scope" value="Archaea"/>
</dbReference>
<dbReference type="HOGENOM" id="CLU_067069_2_0_2"/>
<dbReference type="UniPathway" id="UPA00070">
    <property type="reaction ID" value="UER00120"/>
</dbReference>
<dbReference type="Proteomes" id="UP000000595">
    <property type="component" value="Chromosome"/>
</dbReference>
<dbReference type="GO" id="GO:0005829">
    <property type="term" value="C:cytosol"/>
    <property type="evidence" value="ECO:0007669"/>
    <property type="project" value="TreeGrafter"/>
</dbReference>
<dbReference type="GO" id="GO:0004590">
    <property type="term" value="F:orotidine-5'-phosphate decarboxylase activity"/>
    <property type="evidence" value="ECO:0007669"/>
    <property type="project" value="UniProtKB-UniRule"/>
</dbReference>
<dbReference type="GO" id="GO:0006207">
    <property type="term" value="P:'de novo' pyrimidine nucleobase biosynthetic process"/>
    <property type="evidence" value="ECO:0007669"/>
    <property type="project" value="InterPro"/>
</dbReference>
<dbReference type="GO" id="GO:0044205">
    <property type="term" value="P:'de novo' UMP biosynthetic process"/>
    <property type="evidence" value="ECO:0007669"/>
    <property type="project" value="UniProtKB-UniRule"/>
</dbReference>
<dbReference type="CDD" id="cd04725">
    <property type="entry name" value="OMP_decarboxylase_like"/>
    <property type="match status" value="1"/>
</dbReference>
<dbReference type="Gene3D" id="3.20.20.70">
    <property type="entry name" value="Aldolase class I"/>
    <property type="match status" value="1"/>
</dbReference>
<dbReference type="HAMAP" id="MF_01200_A">
    <property type="entry name" value="OMPdecase_type1_A"/>
    <property type="match status" value="1"/>
</dbReference>
<dbReference type="InterPro" id="IPR013785">
    <property type="entry name" value="Aldolase_TIM"/>
</dbReference>
<dbReference type="InterPro" id="IPR014732">
    <property type="entry name" value="OMPdecase"/>
</dbReference>
<dbReference type="InterPro" id="IPR047595">
    <property type="entry name" value="OMPdecase_arc"/>
</dbReference>
<dbReference type="InterPro" id="IPR018089">
    <property type="entry name" value="OMPdecase_AS"/>
</dbReference>
<dbReference type="InterPro" id="IPR001754">
    <property type="entry name" value="OMPdeCOase_dom"/>
</dbReference>
<dbReference type="InterPro" id="IPR011060">
    <property type="entry name" value="RibuloseP-bd_barrel"/>
</dbReference>
<dbReference type="NCBIfam" id="NF010386">
    <property type="entry name" value="PRK13813.1"/>
    <property type="match status" value="1"/>
</dbReference>
<dbReference type="NCBIfam" id="TIGR01740">
    <property type="entry name" value="pyrF"/>
    <property type="match status" value="1"/>
</dbReference>
<dbReference type="PANTHER" id="PTHR32119">
    <property type="entry name" value="OROTIDINE 5'-PHOSPHATE DECARBOXYLASE"/>
    <property type="match status" value="1"/>
</dbReference>
<dbReference type="PANTHER" id="PTHR32119:SF2">
    <property type="entry name" value="OROTIDINE 5'-PHOSPHATE DECARBOXYLASE"/>
    <property type="match status" value="1"/>
</dbReference>
<dbReference type="Pfam" id="PF00215">
    <property type="entry name" value="OMPdecase"/>
    <property type="match status" value="1"/>
</dbReference>
<dbReference type="SMART" id="SM00934">
    <property type="entry name" value="OMPdecase"/>
    <property type="match status" value="1"/>
</dbReference>
<dbReference type="SUPFAM" id="SSF51366">
    <property type="entry name" value="Ribulose-phoshate binding barrel"/>
    <property type="match status" value="1"/>
</dbReference>
<dbReference type="PROSITE" id="PS00156">
    <property type="entry name" value="OMPDECASE"/>
    <property type="match status" value="1"/>
</dbReference>
<evidence type="ECO:0000255" key="1">
    <source>
        <dbReference type="HAMAP-Rule" id="MF_01200"/>
    </source>
</evidence>